<accession>Q97RQ3</accession>
<name>UPP_STRPN</name>
<feature type="chain" id="PRO_0000120894" description="Uracil phosphoribosyltransferase">
    <location>
        <begin position="1"/>
        <end position="209"/>
    </location>
</feature>
<feature type="binding site" evidence="1">
    <location>
        <position position="79"/>
    </location>
    <ligand>
        <name>5-phospho-alpha-D-ribose 1-diphosphate</name>
        <dbReference type="ChEBI" id="CHEBI:58017"/>
    </ligand>
</feature>
<feature type="binding site" evidence="1">
    <location>
        <position position="104"/>
    </location>
    <ligand>
        <name>5-phospho-alpha-D-ribose 1-diphosphate</name>
        <dbReference type="ChEBI" id="CHEBI:58017"/>
    </ligand>
</feature>
<feature type="binding site" evidence="1">
    <location>
        <begin position="131"/>
        <end position="139"/>
    </location>
    <ligand>
        <name>5-phospho-alpha-D-ribose 1-diphosphate</name>
        <dbReference type="ChEBI" id="CHEBI:58017"/>
    </ligand>
</feature>
<feature type="binding site" evidence="1">
    <location>
        <position position="194"/>
    </location>
    <ligand>
        <name>uracil</name>
        <dbReference type="ChEBI" id="CHEBI:17568"/>
    </ligand>
</feature>
<feature type="binding site" evidence="1">
    <location>
        <begin position="199"/>
        <end position="201"/>
    </location>
    <ligand>
        <name>uracil</name>
        <dbReference type="ChEBI" id="CHEBI:17568"/>
    </ligand>
</feature>
<feature type="binding site" evidence="1">
    <location>
        <position position="200"/>
    </location>
    <ligand>
        <name>5-phospho-alpha-D-ribose 1-diphosphate</name>
        <dbReference type="ChEBI" id="CHEBI:58017"/>
    </ligand>
</feature>
<organism>
    <name type="scientific">Streptococcus pneumoniae serotype 4 (strain ATCC BAA-334 / TIGR4)</name>
    <dbReference type="NCBI Taxonomy" id="170187"/>
    <lineage>
        <taxon>Bacteria</taxon>
        <taxon>Bacillati</taxon>
        <taxon>Bacillota</taxon>
        <taxon>Bacilli</taxon>
        <taxon>Lactobacillales</taxon>
        <taxon>Streptococcaceae</taxon>
        <taxon>Streptococcus</taxon>
    </lineage>
</organism>
<protein>
    <recommendedName>
        <fullName evidence="1">Uracil phosphoribosyltransferase</fullName>
        <ecNumber evidence="1">2.4.2.9</ecNumber>
    </recommendedName>
    <alternativeName>
        <fullName evidence="1">UMP pyrophosphorylase</fullName>
    </alternativeName>
    <alternativeName>
        <fullName evidence="1">UPRTase</fullName>
    </alternativeName>
</protein>
<dbReference type="EC" id="2.4.2.9" evidence="1"/>
<dbReference type="EMBL" id="AE005672">
    <property type="protein sequence ID" value="AAK74884.1"/>
    <property type="molecule type" value="Genomic_DNA"/>
</dbReference>
<dbReference type="PIR" id="C95086">
    <property type="entry name" value="C95086"/>
</dbReference>
<dbReference type="RefSeq" id="WP_000515972.1">
    <property type="nucleotide sequence ID" value="NZ_CP155539.1"/>
</dbReference>
<dbReference type="SMR" id="Q97RQ3"/>
<dbReference type="PaxDb" id="170187-SP_0745"/>
<dbReference type="EnsemblBacteria" id="AAK74884">
    <property type="protein sequence ID" value="AAK74884"/>
    <property type="gene ID" value="SP_0745"/>
</dbReference>
<dbReference type="KEGG" id="spn:SP_0745"/>
<dbReference type="eggNOG" id="COG0035">
    <property type="taxonomic scope" value="Bacteria"/>
</dbReference>
<dbReference type="PhylomeDB" id="Q97RQ3"/>
<dbReference type="BioCyc" id="SPNE170187:G1FZB-761-MONOMER"/>
<dbReference type="UniPathway" id="UPA00574">
    <property type="reaction ID" value="UER00636"/>
</dbReference>
<dbReference type="Proteomes" id="UP000000585">
    <property type="component" value="Chromosome"/>
</dbReference>
<dbReference type="GO" id="GO:0005525">
    <property type="term" value="F:GTP binding"/>
    <property type="evidence" value="ECO:0007669"/>
    <property type="project" value="UniProtKB-KW"/>
</dbReference>
<dbReference type="GO" id="GO:0000287">
    <property type="term" value="F:magnesium ion binding"/>
    <property type="evidence" value="ECO:0007669"/>
    <property type="project" value="UniProtKB-UniRule"/>
</dbReference>
<dbReference type="GO" id="GO:0004845">
    <property type="term" value="F:uracil phosphoribosyltransferase activity"/>
    <property type="evidence" value="ECO:0007669"/>
    <property type="project" value="UniProtKB-UniRule"/>
</dbReference>
<dbReference type="GO" id="GO:0044206">
    <property type="term" value="P:UMP salvage"/>
    <property type="evidence" value="ECO:0007669"/>
    <property type="project" value="UniProtKB-UniRule"/>
</dbReference>
<dbReference type="GO" id="GO:0006223">
    <property type="term" value="P:uracil salvage"/>
    <property type="evidence" value="ECO:0007669"/>
    <property type="project" value="InterPro"/>
</dbReference>
<dbReference type="CDD" id="cd06223">
    <property type="entry name" value="PRTases_typeI"/>
    <property type="match status" value="1"/>
</dbReference>
<dbReference type="FunFam" id="3.40.50.2020:FF:000003">
    <property type="entry name" value="Uracil phosphoribosyltransferase"/>
    <property type="match status" value="1"/>
</dbReference>
<dbReference type="Gene3D" id="3.40.50.2020">
    <property type="match status" value="1"/>
</dbReference>
<dbReference type="HAMAP" id="MF_01218_B">
    <property type="entry name" value="Upp_B"/>
    <property type="match status" value="1"/>
</dbReference>
<dbReference type="InterPro" id="IPR000836">
    <property type="entry name" value="PRibTrfase_dom"/>
</dbReference>
<dbReference type="InterPro" id="IPR029057">
    <property type="entry name" value="PRTase-like"/>
</dbReference>
<dbReference type="InterPro" id="IPR034332">
    <property type="entry name" value="Upp_B"/>
</dbReference>
<dbReference type="InterPro" id="IPR050054">
    <property type="entry name" value="UPRTase/APRTase"/>
</dbReference>
<dbReference type="InterPro" id="IPR005765">
    <property type="entry name" value="Ura_phspho_trans"/>
</dbReference>
<dbReference type="NCBIfam" id="NF001097">
    <property type="entry name" value="PRK00129.1"/>
    <property type="match status" value="1"/>
</dbReference>
<dbReference type="NCBIfam" id="TIGR01091">
    <property type="entry name" value="upp"/>
    <property type="match status" value="1"/>
</dbReference>
<dbReference type="PANTHER" id="PTHR32315">
    <property type="entry name" value="ADENINE PHOSPHORIBOSYLTRANSFERASE"/>
    <property type="match status" value="1"/>
</dbReference>
<dbReference type="PANTHER" id="PTHR32315:SF4">
    <property type="entry name" value="URACIL PHOSPHORIBOSYLTRANSFERASE, CHLOROPLASTIC"/>
    <property type="match status" value="1"/>
</dbReference>
<dbReference type="Pfam" id="PF14681">
    <property type="entry name" value="UPRTase"/>
    <property type="match status" value="1"/>
</dbReference>
<dbReference type="SUPFAM" id="SSF53271">
    <property type="entry name" value="PRTase-like"/>
    <property type="match status" value="1"/>
</dbReference>
<keyword id="KW-0021">Allosteric enzyme</keyword>
<keyword id="KW-0328">Glycosyltransferase</keyword>
<keyword id="KW-0342">GTP-binding</keyword>
<keyword id="KW-0460">Magnesium</keyword>
<keyword id="KW-0547">Nucleotide-binding</keyword>
<keyword id="KW-1185">Reference proteome</keyword>
<keyword id="KW-0808">Transferase</keyword>
<gene>
    <name evidence="1" type="primary">upp</name>
    <name type="ordered locus">SP_0745</name>
</gene>
<comment type="function">
    <text evidence="1">Catalyzes the conversion of uracil and 5-phospho-alpha-D-ribose 1-diphosphate (PRPP) to UMP and diphosphate.</text>
</comment>
<comment type="catalytic activity">
    <reaction evidence="1">
        <text>UMP + diphosphate = 5-phospho-alpha-D-ribose 1-diphosphate + uracil</text>
        <dbReference type="Rhea" id="RHEA:13017"/>
        <dbReference type="ChEBI" id="CHEBI:17568"/>
        <dbReference type="ChEBI" id="CHEBI:33019"/>
        <dbReference type="ChEBI" id="CHEBI:57865"/>
        <dbReference type="ChEBI" id="CHEBI:58017"/>
        <dbReference type="EC" id="2.4.2.9"/>
    </reaction>
</comment>
<comment type="cofactor">
    <cofactor evidence="1">
        <name>Mg(2+)</name>
        <dbReference type="ChEBI" id="CHEBI:18420"/>
    </cofactor>
    <text evidence="1">Binds 1 Mg(2+) ion per subunit. The magnesium is bound as Mg-PRPP.</text>
</comment>
<comment type="activity regulation">
    <text evidence="1">Allosterically activated by GTP.</text>
</comment>
<comment type="pathway">
    <text evidence="1">Pyrimidine metabolism; UMP biosynthesis via salvage pathway; UMP from uracil: step 1/1.</text>
</comment>
<comment type="similarity">
    <text evidence="1">Belongs to the UPRTase family.</text>
</comment>
<reference key="1">
    <citation type="journal article" date="2001" name="Science">
        <title>Complete genome sequence of a virulent isolate of Streptococcus pneumoniae.</title>
        <authorList>
            <person name="Tettelin H."/>
            <person name="Nelson K.E."/>
            <person name="Paulsen I.T."/>
            <person name="Eisen J.A."/>
            <person name="Read T.D."/>
            <person name="Peterson S.N."/>
            <person name="Heidelberg J.F."/>
            <person name="DeBoy R.T."/>
            <person name="Haft D.H."/>
            <person name="Dodson R.J."/>
            <person name="Durkin A.S."/>
            <person name="Gwinn M.L."/>
            <person name="Kolonay J.F."/>
            <person name="Nelson W.C."/>
            <person name="Peterson J.D."/>
            <person name="Umayam L.A."/>
            <person name="White O."/>
            <person name="Salzberg S.L."/>
            <person name="Lewis M.R."/>
            <person name="Radune D."/>
            <person name="Holtzapple E.K."/>
            <person name="Khouri H.M."/>
            <person name="Wolf A.M."/>
            <person name="Utterback T.R."/>
            <person name="Hansen C.L."/>
            <person name="McDonald L.A."/>
            <person name="Feldblyum T.V."/>
            <person name="Angiuoli S.V."/>
            <person name="Dickinson T."/>
            <person name="Hickey E.K."/>
            <person name="Holt I.E."/>
            <person name="Loftus B.J."/>
            <person name="Yang F."/>
            <person name="Smith H.O."/>
            <person name="Venter J.C."/>
            <person name="Dougherty B.A."/>
            <person name="Morrison D.A."/>
            <person name="Hollingshead S.K."/>
            <person name="Fraser C.M."/>
        </authorList>
    </citation>
    <scope>NUCLEOTIDE SEQUENCE [LARGE SCALE GENOMIC DNA]</scope>
    <source>
        <strain>ATCC BAA-334 / TIGR4</strain>
    </source>
</reference>
<sequence>MGKIEVINHPLIQHKLSILRRTDTSTKAFRELVDEIAMLMGYEVLRDLPLEDVEIETPITKTVQKQLAGKKLAIVPILRAGIGMVDGLLNLVPAAKVGHIGMYRDEETLQPVEYLVKLPEDIDQRQIFVVDPMLATGGSAILAVDSLKKRGASNIKFVCLVSAPEGVKALQEAHPDVEIFTAALDERLNEHGYIVPGLGDAGDRLFGTK</sequence>
<proteinExistence type="inferred from homology"/>
<evidence type="ECO:0000255" key="1">
    <source>
        <dbReference type="HAMAP-Rule" id="MF_01218"/>
    </source>
</evidence>